<reference key="1">
    <citation type="journal article" date="2008" name="DNA Res.">
        <title>Determination of the genome sequence of Porphyromonas gingivalis strain ATCC 33277 and genomic comparison with strain W83 revealed extensive genome rearrangements in P. gingivalis.</title>
        <authorList>
            <person name="Naito M."/>
            <person name="Hirakawa H."/>
            <person name="Yamashita A."/>
            <person name="Ohara N."/>
            <person name="Shoji M."/>
            <person name="Yukitake H."/>
            <person name="Nakayama K."/>
            <person name="Toh H."/>
            <person name="Yoshimura F."/>
            <person name="Kuhara S."/>
            <person name="Hattori M."/>
            <person name="Hayashi T."/>
            <person name="Nakayama K."/>
        </authorList>
    </citation>
    <scope>NUCLEOTIDE SEQUENCE [LARGE SCALE GENOMIC DNA]</scope>
    <source>
        <strain>ATCC 33277 / DSM 20709 / CIP 103683 / JCM 12257 / NCTC 11834 / 2561</strain>
    </source>
</reference>
<gene>
    <name evidence="1" type="primary">metK</name>
    <name type="ordered locus">PGN_1827</name>
</gene>
<keyword id="KW-0067">ATP-binding</keyword>
<keyword id="KW-0963">Cytoplasm</keyword>
<keyword id="KW-0460">Magnesium</keyword>
<keyword id="KW-0479">Metal-binding</keyword>
<keyword id="KW-0547">Nucleotide-binding</keyword>
<keyword id="KW-0554">One-carbon metabolism</keyword>
<keyword id="KW-0630">Potassium</keyword>
<keyword id="KW-0808">Transferase</keyword>
<comment type="function">
    <text evidence="1">Catalyzes the formation of S-adenosylmethionine (AdoMet) from methionine and ATP. The overall synthetic reaction is composed of two sequential steps, AdoMet formation and the subsequent tripolyphosphate hydrolysis which occurs prior to release of AdoMet from the enzyme.</text>
</comment>
<comment type="catalytic activity">
    <reaction evidence="1">
        <text>L-methionine + ATP + H2O = S-adenosyl-L-methionine + phosphate + diphosphate</text>
        <dbReference type="Rhea" id="RHEA:21080"/>
        <dbReference type="ChEBI" id="CHEBI:15377"/>
        <dbReference type="ChEBI" id="CHEBI:30616"/>
        <dbReference type="ChEBI" id="CHEBI:33019"/>
        <dbReference type="ChEBI" id="CHEBI:43474"/>
        <dbReference type="ChEBI" id="CHEBI:57844"/>
        <dbReference type="ChEBI" id="CHEBI:59789"/>
        <dbReference type="EC" id="2.5.1.6"/>
    </reaction>
</comment>
<comment type="cofactor">
    <cofactor evidence="1">
        <name>Mg(2+)</name>
        <dbReference type="ChEBI" id="CHEBI:18420"/>
    </cofactor>
    <text evidence="1">Binds 2 divalent ions per subunit.</text>
</comment>
<comment type="cofactor">
    <cofactor evidence="1">
        <name>K(+)</name>
        <dbReference type="ChEBI" id="CHEBI:29103"/>
    </cofactor>
    <text evidence="1">Binds 1 potassium ion per subunit.</text>
</comment>
<comment type="pathway">
    <text evidence="1">Amino-acid biosynthesis; S-adenosyl-L-methionine biosynthesis; S-adenosyl-L-methionine from L-methionine: step 1/1.</text>
</comment>
<comment type="subunit">
    <text evidence="1">Homotetramer; dimer of dimers.</text>
</comment>
<comment type="subcellular location">
    <subcellularLocation>
        <location evidence="1">Cytoplasm</location>
    </subcellularLocation>
</comment>
<comment type="similarity">
    <text evidence="1">Belongs to the AdoMet synthase family.</text>
</comment>
<evidence type="ECO:0000255" key="1">
    <source>
        <dbReference type="HAMAP-Rule" id="MF_00086"/>
    </source>
</evidence>
<organism>
    <name type="scientific">Porphyromonas gingivalis (strain ATCC 33277 / DSM 20709 / CIP 103683 / JCM 12257 / NCTC 11834 / 2561)</name>
    <dbReference type="NCBI Taxonomy" id="431947"/>
    <lineage>
        <taxon>Bacteria</taxon>
        <taxon>Pseudomonadati</taxon>
        <taxon>Bacteroidota</taxon>
        <taxon>Bacteroidia</taxon>
        <taxon>Bacteroidales</taxon>
        <taxon>Porphyromonadaceae</taxon>
        <taxon>Porphyromonas</taxon>
    </lineage>
</organism>
<name>METK_PORG3</name>
<dbReference type="EC" id="2.5.1.6" evidence="1"/>
<dbReference type="EMBL" id="AP009380">
    <property type="protein sequence ID" value="BAG34346.1"/>
    <property type="molecule type" value="Genomic_DNA"/>
</dbReference>
<dbReference type="RefSeq" id="WP_012458565.1">
    <property type="nucleotide sequence ID" value="NC_010729.1"/>
</dbReference>
<dbReference type="SMR" id="B2RLV1"/>
<dbReference type="GeneID" id="29256978"/>
<dbReference type="KEGG" id="pgn:PGN_1827"/>
<dbReference type="eggNOG" id="COG0192">
    <property type="taxonomic scope" value="Bacteria"/>
</dbReference>
<dbReference type="HOGENOM" id="CLU_041802_1_1_10"/>
<dbReference type="OrthoDB" id="9801686at2"/>
<dbReference type="BioCyc" id="PGIN431947:G1G2V-2038-MONOMER"/>
<dbReference type="UniPathway" id="UPA00315">
    <property type="reaction ID" value="UER00080"/>
</dbReference>
<dbReference type="Proteomes" id="UP000008842">
    <property type="component" value="Chromosome"/>
</dbReference>
<dbReference type="GO" id="GO:0005737">
    <property type="term" value="C:cytoplasm"/>
    <property type="evidence" value="ECO:0007669"/>
    <property type="project" value="UniProtKB-SubCell"/>
</dbReference>
<dbReference type="GO" id="GO:0005524">
    <property type="term" value="F:ATP binding"/>
    <property type="evidence" value="ECO:0007669"/>
    <property type="project" value="UniProtKB-UniRule"/>
</dbReference>
<dbReference type="GO" id="GO:0000287">
    <property type="term" value="F:magnesium ion binding"/>
    <property type="evidence" value="ECO:0007669"/>
    <property type="project" value="UniProtKB-UniRule"/>
</dbReference>
<dbReference type="GO" id="GO:0004478">
    <property type="term" value="F:methionine adenosyltransferase activity"/>
    <property type="evidence" value="ECO:0007669"/>
    <property type="project" value="UniProtKB-UniRule"/>
</dbReference>
<dbReference type="GO" id="GO:0006730">
    <property type="term" value="P:one-carbon metabolic process"/>
    <property type="evidence" value="ECO:0007669"/>
    <property type="project" value="UniProtKB-KW"/>
</dbReference>
<dbReference type="GO" id="GO:0006556">
    <property type="term" value="P:S-adenosylmethionine biosynthetic process"/>
    <property type="evidence" value="ECO:0007669"/>
    <property type="project" value="UniProtKB-UniRule"/>
</dbReference>
<dbReference type="CDD" id="cd18079">
    <property type="entry name" value="S-AdoMet_synt"/>
    <property type="match status" value="1"/>
</dbReference>
<dbReference type="Gene3D" id="3.30.300.10">
    <property type="match status" value="3"/>
</dbReference>
<dbReference type="HAMAP" id="MF_00086">
    <property type="entry name" value="S_AdoMet_synth1"/>
    <property type="match status" value="1"/>
</dbReference>
<dbReference type="InterPro" id="IPR022631">
    <property type="entry name" value="ADOMET_SYNTHASE_CS"/>
</dbReference>
<dbReference type="InterPro" id="IPR022630">
    <property type="entry name" value="S-AdoMet_synt_C"/>
</dbReference>
<dbReference type="InterPro" id="IPR022629">
    <property type="entry name" value="S-AdoMet_synt_central"/>
</dbReference>
<dbReference type="InterPro" id="IPR022628">
    <property type="entry name" value="S-AdoMet_synt_N"/>
</dbReference>
<dbReference type="InterPro" id="IPR002133">
    <property type="entry name" value="S-AdoMet_synthetase"/>
</dbReference>
<dbReference type="InterPro" id="IPR022636">
    <property type="entry name" value="S-AdoMet_synthetase_sfam"/>
</dbReference>
<dbReference type="NCBIfam" id="TIGR01034">
    <property type="entry name" value="metK"/>
    <property type="match status" value="1"/>
</dbReference>
<dbReference type="PANTHER" id="PTHR11964">
    <property type="entry name" value="S-ADENOSYLMETHIONINE SYNTHETASE"/>
    <property type="match status" value="1"/>
</dbReference>
<dbReference type="Pfam" id="PF02773">
    <property type="entry name" value="S-AdoMet_synt_C"/>
    <property type="match status" value="1"/>
</dbReference>
<dbReference type="Pfam" id="PF02772">
    <property type="entry name" value="S-AdoMet_synt_M"/>
    <property type="match status" value="1"/>
</dbReference>
<dbReference type="Pfam" id="PF00438">
    <property type="entry name" value="S-AdoMet_synt_N"/>
    <property type="match status" value="1"/>
</dbReference>
<dbReference type="PIRSF" id="PIRSF000497">
    <property type="entry name" value="MAT"/>
    <property type="match status" value="1"/>
</dbReference>
<dbReference type="SUPFAM" id="SSF55973">
    <property type="entry name" value="S-adenosylmethionine synthetase"/>
    <property type="match status" value="3"/>
</dbReference>
<dbReference type="PROSITE" id="PS00376">
    <property type="entry name" value="ADOMET_SYNTHASE_1"/>
    <property type="match status" value="1"/>
</dbReference>
<dbReference type="PROSITE" id="PS00377">
    <property type="entry name" value="ADOMET_SYNTHASE_2"/>
    <property type="match status" value="1"/>
</dbReference>
<accession>B2RLV1</accession>
<proteinExistence type="inferred from homology"/>
<protein>
    <recommendedName>
        <fullName evidence="1">S-adenosylmethionine synthase</fullName>
        <shortName evidence="1">AdoMet synthase</shortName>
        <ecNumber evidence="1">2.5.1.6</ecNumber>
    </recommendedName>
    <alternativeName>
        <fullName evidence="1">MAT</fullName>
    </alternativeName>
    <alternativeName>
        <fullName evidence="1">Methionine adenosyltransferase</fullName>
    </alternativeName>
</protein>
<feature type="chain" id="PRO_1000093071" description="S-adenosylmethionine synthase">
    <location>
        <begin position="1"/>
        <end position="429"/>
    </location>
</feature>
<feature type="region of interest" description="Flexible loop" evidence="1">
    <location>
        <begin position="98"/>
        <end position="108"/>
    </location>
</feature>
<feature type="binding site" description="in other chain" evidence="1">
    <location>
        <position position="14"/>
    </location>
    <ligand>
        <name>ATP</name>
        <dbReference type="ChEBI" id="CHEBI:30616"/>
        <note>ligand shared between two neighboring subunits</note>
    </ligand>
</feature>
<feature type="binding site" evidence="1">
    <location>
        <position position="16"/>
    </location>
    <ligand>
        <name>Mg(2+)</name>
        <dbReference type="ChEBI" id="CHEBI:18420"/>
    </ligand>
</feature>
<feature type="binding site" evidence="1">
    <location>
        <position position="42"/>
    </location>
    <ligand>
        <name>K(+)</name>
        <dbReference type="ChEBI" id="CHEBI:29103"/>
    </ligand>
</feature>
<feature type="binding site" description="in other chain" evidence="1">
    <location>
        <position position="55"/>
    </location>
    <ligand>
        <name>L-methionine</name>
        <dbReference type="ChEBI" id="CHEBI:57844"/>
        <note>ligand shared between two neighboring subunits</note>
    </ligand>
</feature>
<feature type="binding site" description="in other chain" evidence="1">
    <location>
        <position position="98"/>
    </location>
    <ligand>
        <name>L-methionine</name>
        <dbReference type="ChEBI" id="CHEBI:57844"/>
        <note>ligand shared between two neighboring subunits</note>
    </ligand>
</feature>
<feature type="binding site" description="in other chain" evidence="1">
    <location>
        <begin position="165"/>
        <end position="167"/>
    </location>
    <ligand>
        <name>ATP</name>
        <dbReference type="ChEBI" id="CHEBI:30616"/>
        <note>ligand shared between two neighboring subunits</note>
    </ligand>
</feature>
<feature type="binding site" description="in other chain" evidence="1">
    <location>
        <begin position="252"/>
        <end position="253"/>
    </location>
    <ligand>
        <name>ATP</name>
        <dbReference type="ChEBI" id="CHEBI:30616"/>
        <note>ligand shared between two neighboring subunits</note>
    </ligand>
</feature>
<feature type="binding site" evidence="1">
    <location>
        <position position="261"/>
    </location>
    <ligand>
        <name>ATP</name>
        <dbReference type="ChEBI" id="CHEBI:30616"/>
        <note>ligand shared between two neighboring subunits</note>
    </ligand>
</feature>
<feature type="binding site" evidence="1">
    <location>
        <position position="261"/>
    </location>
    <ligand>
        <name>L-methionine</name>
        <dbReference type="ChEBI" id="CHEBI:57844"/>
        <note>ligand shared between two neighboring subunits</note>
    </ligand>
</feature>
<feature type="binding site" description="in other chain" evidence="1">
    <location>
        <begin position="267"/>
        <end position="268"/>
    </location>
    <ligand>
        <name>ATP</name>
        <dbReference type="ChEBI" id="CHEBI:30616"/>
        <note>ligand shared between two neighboring subunits</note>
    </ligand>
</feature>
<feature type="binding site" evidence="1">
    <location>
        <position position="284"/>
    </location>
    <ligand>
        <name>ATP</name>
        <dbReference type="ChEBI" id="CHEBI:30616"/>
        <note>ligand shared between two neighboring subunits</note>
    </ligand>
</feature>
<feature type="binding site" evidence="1">
    <location>
        <position position="288"/>
    </location>
    <ligand>
        <name>ATP</name>
        <dbReference type="ChEBI" id="CHEBI:30616"/>
        <note>ligand shared between two neighboring subunits</note>
    </ligand>
</feature>
<feature type="binding site" description="in other chain" evidence="1">
    <location>
        <position position="292"/>
    </location>
    <ligand>
        <name>L-methionine</name>
        <dbReference type="ChEBI" id="CHEBI:57844"/>
        <note>ligand shared between two neighboring subunits</note>
    </ligand>
</feature>
<sequence length="429" mass="47570">MSYLFTSESVSEGHPDKVSDQISDAILDQFLATDPDSKVACETLVTTGQVVLAGEVKSRSYVDVQETARRVIEKIGYTKSEYGFDARSCGIFSSIHGQSADINRGVDRSDRSEQGAGDQGMMFGYATNETENYMPLTVDLAHHLLYELATIRKEPSSPMPYLRPDAKSQVTIEHDDEGRPVRIDTIVISTQHDEFVQASDGISEAEADRMMQERIHHDIATILIPRVKMLYKPEIAALFDEKVRLFVNPTGKFVIGGPHGDTGLTGRKIIVDTYGGRASHGGGAFSGKDPSKVDRSAAYAARHIAKNMVAAGVADEMLVQVAYAIGVAEPVSIYVNTKGRSHVALSDGQIAEKIKKIFDMRPYAIEQRLKLRNPIYEETAAYGHFGREPYEAYKTFVDEHGTEQMRIVELFTWEKLDYVNKIKAEFGLS</sequence>